<name>FUCI_SALPA</name>
<sequence>MKKISLPKIGIRPVIDGRRMGVRESLEEQTMNMAKATAALITEKIRHACGAQVECVIADTCIAGMAESAACEEKFSSQNVGVTITVTPCWCYGSETIDMDPMRPKAIWGFNGTERPGAVYLAAALAAHSQKGIPAFSIYGHDVQDADDTSIPADVEEKLLRFARAGLAVASMKGKSYLSVGGVSMGIAGSIVDHNFFESWLGMKVQAVDMTELRRRIDQKIYDEAELEMALAWADKNFRYGEDQNASQYKRNEAQNRAVLKESLLMAMCIRDMMQGNKTLADKGLVEESLGYNAIAAGFQGQRHWTDQYPNGDTAEALLNSSFDWNGVREPFVVATENDSLNGVAMLFGHQLTGTAQIFADVRTYWSPEAVERVTGQALSGLAEHGIIHLINSGSAALDGACKQRDSEGKPTMKPHWEISQQEADACLAATEWCPAIHEYFRGGGYSSRFLTEGGVPFTMTRVNIIKGLGPVLQIAEGWSVELPKAMHDQLDARTNSTWPTTWFAPRLTGKGPFTDVYSVMANWGANHGVLTIGHVGADFITLAAMLRIPVCMHNVEEAKIYRPSAWAAHGMDIEGQDYRACQNYGPLYKR</sequence>
<accession>Q5PEK9</accession>
<evidence type="ECO:0000255" key="1">
    <source>
        <dbReference type="HAMAP-Rule" id="MF_01254"/>
    </source>
</evidence>
<proteinExistence type="inferred from homology"/>
<organism>
    <name type="scientific">Salmonella paratyphi A (strain ATCC 9150 / SARB42)</name>
    <dbReference type="NCBI Taxonomy" id="295319"/>
    <lineage>
        <taxon>Bacteria</taxon>
        <taxon>Pseudomonadati</taxon>
        <taxon>Pseudomonadota</taxon>
        <taxon>Gammaproteobacteria</taxon>
        <taxon>Enterobacterales</taxon>
        <taxon>Enterobacteriaceae</taxon>
        <taxon>Salmonella</taxon>
    </lineage>
</organism>
<comment type="function">
    <text evidence="1">Converts the aldose L-fucose into the corresponding ketose L-fuculose.</text>
</comment>
<comment type="catalytic activity">
    <reaction evidence="1">
        <text>L-fucose = L-fuculose</text>
        <dbReference type="Rhea" id="RHEA:17233"/>
        <dbReference type="ChEBI" id="CHEBI:2181"/>
        <dbReference type="ChEBI" id="CHEBI:17617"/>
        <dbReference type="EC" id="5.3.1.25"/>
    </reaction>
</comment>
<comment type="cofactor">
    <cofactor evidence="1">
        <name>Mn(2+)</name>
        <dbReference type="ChEBI" id="CHEBI:29035"/>
    </cofactor>
</comment>
<comment type="pathway">
    <text evidence="1">Carbohydrate degradation; L-fucose degradation; L-lactaldehyde and glycerone phosphate from L-fucose: step 1/3.</text>
</comment>
<comment type="subunit">
    <text evidence="1">Homohexamer.</text>
</comment>
<comment type="subcellular location">
    <subcellularLocation>
        <location evidence="1">Cytoplasm</location>
    </subcellularLocation>
</comment>
<comment type="similarity">
    <text evidence="1">Belongs to the L-fucose isomerase family.</text>
</comment>
<dbReference type="EC" id="5.3.1.25" evidence="1"/>
<dbReference type="EMBL" id="CP000026">
    <property type="protein sequence ID" value="AAV78688.1"/>
    <property type="molecule type" value="Genomic_DNA"/>
</dbReference>
<dbReference type="RefSeq" id="WP_000724126.1">
    <property type="nucleotide sequence ID" value="NC_006511.1"/>
</dbReference>
<dbReference type="SMR" id="Q5PEK9"/>
<dbReference type="KEGG" id="spt:SPA2840"/>
<dbReference type="HOGENOM" id="CLU_033326_1_0_6"/>
<dbReference type="UniPathway" id="UPA00563">
    <property type="reaction ID" value="UER00624"/>
</dbReference>
<dbReference type="Proteomes" id="UP000008185">
    <property type="component" value="Chromosome"/>
</dbReference>
<dbReference type="GO" id="GO:0005737">
    <property type="term" value="C:cytoplasm"/>
    <property type="evidence" value="ECO:0007669"/>
    <property type="project" value="UniProtKB-SubCell"/>
</dbReference>
<dbReference type="GO" id="GO:0008790">
    <property type="term" value="F:arabinose isomerase activity"/>
    <property type="evidence" value="ECO:0007669"/>
    <property type="project" value="TreeGrafter"/>
</dbReference>
<dbReference type="GO" id="GO:0008736">
    <property type="term" value="F:L-fucose isomerase activity"/>
    <property type="evidence" value="ECO:0007669"/>
    <property type="project" value="UniProtKB-UniRule"/>
</dbReference>
<dbReference type="GO" id="GO:0030145">
    <property type="term" value="F:manganese ion binding"/>
    <property type="evidence" value="ECO:0007669"/>
    <property type="project" value="UniProtKB-UniRule"/>
</dbReference>
<dbReference type="GO" id="GO:0019571">
    <property type="term" value="P:D-arabinose catabolic process"/>
    <property type="evidence" value="ECO:0007669"/>
    <property type="project" value="TreeGrafter"/>
</dbReference>
<dbReference type="GO" id="GO:0042355">
    <property type="term" value="P:L-fucose catabolic process"/>
    <property type="evidence" value="ECO:0007669"/>
    <property type="project" value="UniProtKB-UniRule"/>
</dbReference>
<dbReference type="FunFam" id="3.20.14.10:FF:000001">
    <property type="entry name" value="L-fucose isomerase"/>
    <property type="match status" value="1"/>
</dbReference>
<dbReference type="FunFam" id="3.40.275.10:FF:000001">
    <property type="entry name" value="L-fucose isomerase"/>
    <property type="match status" value="1"/>
</dbReference>
<dbReference type="FunFam" id="3.40.50.1070:FF:000001">
    <property type="entry name" value="L-fucose isomerase"/>
    <property type="match status" value="1"/>
</dbReference>
<dbReference type="Gene3D" id="3.40.50.1070">
    <property type="match status" value="1"/>
</dbReference>
<dbReference type="Gene3D" id="3.40.275.10">
    <property type="entry name" value="L-fucose Isomerase, Chain A, domain 2"/>
    <property type="match status" value="1"/>
</dbReference>
<dbReference type="Gene3D" id="3.20.14.10">
    <property type="entry name" value="L-fucose/L-arabinose isomerase, C-terminal"/>
    <property type="match status" value="1"/>
</dbReference>
<dbReference type="HAMAP" id="MF_01254">
    <property type="entry name" value="Fucose_iso"/>
    <property type="match status" value="1"/>
</dbReference>
<dbReference type="InterPro" id="IPR004216">
    <property type="entry name" value="Fuc/Ara_isomerase_C"/>
</dbReference>
<dbReference type="InterPro" id="IPR038393">
    <property type="entry name" value="Fuc_iso_dom3_sf"/>
</dbReference>
<dbReference type="InterPro" id="IPR015888">
    <property type="entry name" value="Fuc_isomerase_C"/>
</dbReference>
<dbReference type="InterPro" id="IPR038391">
    <property type="entry name" value="Fucose_iso_dom1_sf"/>
</dbReference>
<dbReference type="InterPro" id="IPR012888">
    <property type="entry name" value="Fucose_iso_N1"/>
</dbReference>
<dbReference type="InterPro" id="IPR005763">
    <property type="entry name" value="Fucose_isomerase"/>
</dbReference>
<dbReference type="InterPro" id="IPR038392">
    <property type="entry name" value="Fucose_isomerase_dom2_sf"/>
</dbReference>
<dbReference type="InterPro" id="IPR009015">
    <property type="entry name" value="Fucose_isomerase_N/cen_sf"/>
</dbReference>
<dbReference type="InterPro" id="IPR012889">
    <property type="entry name" value="Fucose_isomerase_N2"/>
</dbReference>
<dbReference type="NCBIfam" id="TIGR01089">
    <property type="entry name" value="fucI"/>
    <property type="match status" value="1"/>
</dbReference>
<dbReference type="NCBIfam" id="NF008220">
    <property type="entry name" value="PRK10991.1"/>
    <property type="match status" value="1"/>
</dbReference>
<dbReference type="PANTHER" id="PTHR37840">
    <property type="entry name" value="L-FUCOSE ISOMERASE"/>
    <property type="match status" value="1"/>
</dbReference>
<dbReference type="PANTHER" id="PTHR37840:SF1">
    <property type="entry name" value="L-FUCOSE ISOMERASE"/>
    <property type="match status" value="1"/>
</dbReference>
<dbReference type="Pfam" id="PF02952">
    <property type="entry name" value="Fucose_iso_C"/>
    <property type="match status" value="1"/>
</dbReference>
<dbReference type="Pfam" id="PF07881">
    <property type="entry name" value="Fucose_iso_N1"/>
    <property type="match status" value="1"/>
</dbReference>
<dbReference type="Pfam" id="PF07882">
    <property type="entry name" value="Fucose_iso_N2"/>
    <property type="match status" value="1"/>
</dbReference>
<dbReference type="SUPFAM" id="SSF50443">
    <property type="entry name" value="FucI/AraA C-terminal domain-like"/>
    <property type="match status" value="1"/>
</dbReference>
<dbReference type="SUPFAM" id="SSF53743">
    <property type="entry name" value="FucI/AraA N-terminal and middle domains"/>
    <property type="match status" value="1"/>
</dbReference>
<gene>
    <name evidence="1" type="primary">fucI</name>
    <name type="ordered locus">SPA2840</name>
</gene>
<keyword id="KW-0119">Carbohydrate metabolism</keyword>
<keyword id="KW-0963">Cytoplasm</keyword>
<keyword id="KW-0294">Fucose metabolism</keyword>
<keyword id="KW-0413">Isomerase</keyword>
<keyword id="KW-0464">Manganese</keyword>
<keyword id="KW-0479">Metal-binding</keyword>
<feature type="chain" id="PRO_1000067224" description="L-fucose isomerase">
    <location>
        <begin position="1"/>
        <end position="591"/>
    </location>
</feature>
<feature type="active site" description="Proton acceptor" evidence="1">
    <location>
        <position position="337"/>
    </location>
</feature>
<feature type="active site" description="Proton acceptor" evidence="1">
    <location>
        <position position="361"/>
    </location>
</feature>
<feature type="binding site" evidence="1">
    <location>
        <position position="337"/>
    </location>
    <ligand>
        <name>Mn(2+)</name>
        <dbReference type="ChEBI" id="CHEBI:29035"/>
    </ligand>
</feature>
<feature type="binding site" evidence="1">
    <location>
        <position position="361"/>
    </location>
    <ligand>
        <name>Mn(2+)</name>
        <dbReference type="ChEBI" id="CHEBI:29035"/>
    </ligand>
</feature>
<feature type="binding site" evidence="1">
    <location>
        <position position="528"/>
    </location>
    <ligand>
        <name>Mn(2+)</name>
        <dbReference type="ChEBI" id="CHEBI:29035"/>
    </ligand>
</feature>
<protein>
    <recommendedName>
        <fullName evidence="1">L-fucose isomerase</fullName>
        <ecNumber evidence="1">5.3.1.25</ecNumber>
    </recommendedName>
    <alternativeName>
        <fullName evidence="1">6-deoxy-L-galactose isomerase</fullName>
    </alternativeName>
    <alternativeName>
        <fullName>FucIase</fullName>
    </alternativeName>
</protein>
<reference key="1">
    <citation type="journal article" date="2004" name="Nat. Genet.">
        <title>Comparison of genome degradation in Paratyphi A and Typhi, human-restricted serovars of Salmonella enterica that cause typhoid.</title>
        <authorList>
            <person name="McClelland M."/>
            <person name="Sanderson K.E."/>
            <person name="Clifton S.W."/>
            <person name="Latreille P."/>
            <person name="Porwollik S."/>
            <person name="Sabo A."/>
            <person name="Meyer R."/>
            <person name="Bieri T."/>
            <person name="Ozersky P."/>
            <person name="McLellan M."/>
            <person name="Harkins C.R."/>
            <person name="Wang C."/>
            <person name="Nguyen C."/>
            <person name="Berghoff A."/>
            <person name="Elliott G."/>
            <person name="Kohlberg S."/>
            <person name="Strong C."/>
            <person name="Du F."/>
            <person name="Carter J."/>
            <person name="Kremizki C."/>
            <person name="Layman D."/>
            <person name="Leonard S."/>
            <person name="Sun H."/>
            <person name="Fulton L."/>
            <person name="Nash W."/>
            <person name="Miner T."/>
            <person name="Minx P."/>
            <person name="Delehaunty K."/>
            <person name="Fronick C."/>
            <person name="Magrini V."/>
            <person name="Nhan M."/>
            <person name="Warren W."/>
            <person name="Florea L."/>
            <person name="Spieth J."/>
            <person name="Wilson R.K."/>
        </authorList>
    </citation>
    <scope>NUCLEOTIDE SEQUENCE [LARGE SCALE GENOMIC DNA]</scope>
    <source>
        <strain>ATCC 9150 / SARB42</strain>
    </source>
</reference>